<name>PVK1_TARBI</name>
<comment type="function">
    <text evidence="1">Mediates visceral muscle contractile activity (myotropic activity).</text>
</comment>
<comment type="subcellular location">
    <subcellularLocation>
        <location evidence="2">Secreted</location>
    </subcellularLocation>
</comment>
<comment type="mass spectrometry" mass="1025.6" error="0.01" method="MALDI" evidence="4"/>
<comment type="mass spectrometry" mass="1008.6" error="0.01" method="MALDI" evidence="4">
    <text>With pyroglutamate at Gln-1.</text>
</comment>
<comment type="similarity">
    <text evidence="3">Belongs to the periviscerokinin family.</text>
</comment>
<protein>
    <recommendedName>
        <fullName evidence="5">Periviscerokinin-1</fullName>
        <shortName evidence="5">Tarbi-PVK-1</shortName>
    </recommendedName>
</protein>
<proteinExistence type="evidence at protein level"/>
<dbReference type="GO" id="GO:0005576">
    <property type="term" value="C:extracellular region"/>
    <property type="evidence" value="ECO:0007669"/>
    <property type="project" value="UniProtKB-SubCell"/>
</dbReference>
<dbReference type="GO" id="GO:0007218">
    <property type="term" value="P:neuropeptide signaling pathway"/>
    <property type="evidence" value="ECO:0007669"/>
    <property type="project" value="UniProtKB-KW"/>
</dbReference>
<dbReference type="InterPro" id="IPR013231">
    <property type="entry name" value="Periviscerokinin"/>
</dbReference>
<dbReference type="Pfam" id="PF08259">
    <property type="entry name" value="Periviscerokin"/>
    <property type="match status" value="1"/>
</dbReference>
<keyword id="KW-0027">Amidation</keyword>
<keyword id="KW-0903">Direct protein sequencing</keyword>
<keyword id="KW-0527">Neuropeptide</keyword>
<keyword id="KW-0873">Pyrrolidone carboxylic acid</keyword>
<keyword id="KW-0964">Secreted</keyword>
<evidence type="ECO:0000250" key="1">
    <source>
        <dbReference type="UniProtKB" id="P83923"/>
    </source>
</evidence>
<evidence type="ECO:0000250" key="2">
    <source>
        <dbReference type="UniProtKB" id="P84375"/>
    </source>
</evidence>
<evidence type="ECO:0000255" key="3"/>
<evidence type="ECO:0000269" key="4">
    <source>
    </source>
</evidence>
<evidence type="ECO:0000303" key="5">
    <source>
    </source>
</evidence>
<evidence type="ECO:0000305" key="6"/>
<reference evidence="6" key="1">
    <citation type="journal article" date="2010" name="Peptides">
        <title>CAPA-peptides of praying mantids (Mantodea).</title>
        <authorList>
            <person name="Koehler R."/>
            <person name="Predel R."/>
        </authorList>
    </citation>
    <scope>PROTEIN SEQUENCE</scope>
    <scope>MASS SPECTROMETRY</scope>
    <scope>PYROGLUTAMATE FORMATION AT GLN-1</scope>
    <scope>AMIDATION AT VAL-9</scope>
    <source>
        <tissue evidence="4">Abdominal perisympathetic organs</tissue>
    </source>
</reference>
<feature type="peptide" id="PRO_0000395578" description="Periviscerokinin-1" evidence="4">
    <location>
        <begin position="1"/>
        <end position="9"/>
    </location>
</feature>
<feature type="modified residue" description="Pyrrolidone carboxylic acid; partial" evidence="4">
    <location>
        <position position="1"/>
    </location>
</feature>
<feature type="modified residue" description="Valine amide" evidence="4">
    <location>
        <position position="9"/>
    </location>
</feature>
<feature type="unsure residue" description="L or I" evidence="4">
    <location>
        <position position="3"/>
    </location>
</feature>
<feature type="unsure residue" description="I or L" evidence="4">
    <location>
        <position position="4"/>
    </location>
</feature>
<accession>P86675</accession>
<sequence length="9" mass="1026">QGLIPFPRV</sequence>
<organism>
    <name type="scientific">Tarachodes bispinosus</name>
    <name type="common">Praying mantis</name>
    <name type="synonym">Chiropus bispinosus</name>
    <dbReference type="NCBI Taxonomy" id="761653"/>
    <lineage>
        <taxon>Eukaryota</taxon>
        <taxon>Metazoa</taxon>
        <taxon>Ecdysozoa</taxon>
        <taxon>Arthropoda</taxon>
        <taxon>Hexapoda</taxon>
        <taxon>Insecta</taxon>
        <taxon>Pterygota</taxon>
        <taxon>Neoptera</taxon>
        <taxon>Polyneoptera</taxon>
        <taxon>Dictyoptera</taxon>
        <taxon>Mantodea</taxon>
        <taxon>Eumantodea</taxon>
        <taxon>Eremiaphiloidea</taxon>
        <taxon>Eremiaphilidae</taxon>
        <taxon>Tarachodinae</taxon>
        <taxon>Tarachodes</taxon>
    </lineage>
</organism>